<protein>
    <recommendedName>
        <fullName evidence="1">ATP synthase subunit beta</fullName>
        <ecNumber evidence="1">7.1.2.2</ecNumber>
    </recommendedName>
    <alternativeName>
        <fullName evidence="1">ATP synthase F1 sector subunit beta</fullName>
    </alternativeName>
    <alternativeName>
        <fullName evidence="1">F-ATPase subunit beta</fullName>
    </alternativeName>
</protein>
<dbReference type="EC" id="7.1.2.2" evidence="1"/>
<dbReference type="EMBL" id="AM711867">
    <property type="protein sequence ID" value="CAN01213.1"/>
    <property type="molecule type" value="Genomic_DNA"/>
</dbReference>
<dbReference type="RefSeq" id="WP_012037855.1">
    <property type="nucleotide sequence ID" value="NC_009480.1"/>
</dbReference>
<dbReference type="SMR" id="A5CQ60"/>
<dbReference type="GeneID" id="92947139"/>
<dbReference type="KEGG" id="cmi:CMM_1169"/>
<dbReference type="eggNOG" id="COG0055">
    <property type="taxonomic scope" value="Bacteria"/>
</dbReference>
<dbReference type="HOGENOM" id="CLU_022398_0_2_11"/>
<dbReference type="OrthoDB" id="9801639at2"/>
<dbReference type="Proteomes" id="UP000001564">
    <property type="component" value="Chromosome"/>
</dbReference>
<dbReference type="GO" id="GO:0005886">
    <property type="term" value="C:plasma membrane"/>
    <property type="evidence" value="ECO:0007669"/>
    <property type="project" value="UniProtKB-SubCell"/>
</dbReference>
<dbReference type="GO" id="GO:0045259">
    <property type="term" value="C:proton-transporting ATP synthase complex"/>
    <property type="evidence" value="ECO:0007669"/>
    <property type="project" value="UniProtKB-KW"/>
</dbReference>
<dbReference type="GO" id="GO:0005524">
    <property type="term" value="F:ATP binding"/>
    <property type="evidence" value="ECO:0007669"/>
    <property type="project" value="UniProtKB-UniRule"/>
</dbReference>
<dbReference type="GO" id="GO:0016887">
    <property type="term" value="F:ATP hydrolysis activity"/>
    <property type="evidence" value="ECO:0007669"/>
    <property type="project" value="InterPro"/>
</dbReference>
<dbReference type="GO" id="GO:0046933">
    <property type="term" value="F:proton-transporting ATP synthase activity, rotational mechanism"/>
    <property type="evidence" value="ECO:0007669"/>
    <property type="project" value="UniProtKB-UniRule"/>
</dbReference>
<dbReference type="CDD" id="cd18110">
    <property type="entry name" value="ATP-synt_F1_beta_C"/>
    <property type="match status" value="1"/>
</dbReference>
<dbReference type="CDD" id="cd18115">
    <property type="entry name" value="ATP-synt_F1_beta_N"/>
    <property type="match status" value="1"/>
</dbReference>
<dbReference type="CDD" id="cd01133">
    <property type="entry name" value="F1-ATPase_beta_CD"/>
    <property type="match status" value="1"/>
</dbReference>
<dbReference type="FunFam" id="1.10.1140.10:FF:000005">
    <property type="entry name" value="ATP synthase subunit beta"/>
    <property type="match status" value="1"/>
</dbReference>
<dbReference type="FunFam" id="2.40.10.170:FF:000005">
    <property type="entry name" value="ATP synthase subunit beta"/>
    <property type="match status" value="1"/>
</dbReference>
<dbReference type="FunFam" id="3.40.50.300:FF:000004">
    <property type="entry name" value="ATP synthase subunit beta"/>
    <property type="match status" value="1"/>
</dbReference>
<dbReference type="Gene3D" id="2.40.10.170">
    <property type="match status" value="1"/>
</dbReference>
<dbReference type="Gene3D" id="1.10.1140.10">
    <property type="entry name" value="Bovine Mitochondrial F1-atpase, Atp Synthase Beta Chain, Chain D, domain 3"/>
    <property type="match status" value="1"/>
</dbReference>
<dbReference type="Gene3D" id="3.40.50.300">
    <property type="entry name" value="P-loop containing nucleotide triphosphate hydrolases"/>
    <property type="match status" value="1"/>
</dbReference>
<dbReference type="HAMAP" id="MF_01347">
    <property type="entry name" value="ATP_synth_beta_bact"/>
    <property type="match status" value="1"/>
</dbReference>
<dbReference type="InterPro" id="IPR003593">
    <property type="entry name" value="AAA+_ATPase"/>
</dbReference>
<dbReference type="InterPro" id="IPR055190">
    <property type="entry name" value="ATP-synt_VA_C"/>
</dbReference>
<dbReference type="InterPro" id="IPR005722">
    <property type="entry name" value="ATP_synth_F1_bsu"/>
</dbReference>
<dbReference type="InterPro" id="IPR020003">
    <property type="entry name" value="ATPase_a/bsu_AS"/>
</dbReference>
<dbReference type="InterPro" id="IPR050053">
    <property type="entry name" value="ATPase_alpha/beta_chains"/>
</dbReference>
<dbReference type="InterPro" id="IPR004100">
    <property type="entry name" value="ATPase_F1/V1/A1_a/bsu_N"/>
</dbReference>
<dbReference type="InterPro" id="IPR036121">
    <property type="entry name" value="ATPase_F1/V1/A1_a/bsu_N_sf"/>
</dbReference>
<dbReference type="InterPro" id="IPR000194">
    <property type="entry name" value="ATPase_F1/V1/A1_a/bsu_nucl-bd"/>
</dbReference>
<dbReference type="InterPro" id="IPR024034">
    <property type="entry name" value="ATPase_F1/V1_b/a_C"/>
</dbReference>
<dbReference type="InterPro" id="IPR027417">
    <property type="entry name" value="P-loop_NTPase"/>
</dbReference>
<dbReference type="NCBIfam" id="TIGR01039">
    <property type="entry name" value="atpD"/>
    <property type="match status" value="1"/>
</dbReference>
<dbReference type="PANTHER" id="PTHR15184">
    <property type="entry name" value="ATP SYNTHASE"/>
    <property type="match status" value="1"/>
</dbReference>
<dbReference type="PANTHER" id="PTHR15184:SF71">
    <property type="entry name" value="ATP SYNTHASE SUBUNIT BETA, MITOCHONDRIAL"/>
    <property type="match status" value="1"/>
</dbReference>
<dbReference type="Pfam" id="PF00006">
    <property type="entry name" value="ATP-synt_ab"/>
    <property type="match status" value="1"/>
</dbReference>
<dbReference type="Pfam" id="PF02874">
    <property type="entry name" value="ATP-synt_ab_N"/>
    <property type="match status" value="1"/>
</dbReference>
<dbReference type="Pfam" id="PF22919">
    <property type="entry name" value="ATP-synt_VA_C"/>
    <property type="match status" value="1"/>
</dbReference>
<dbReference type="SMART" id="SM00382">
    <property type="entry name" value="AAA"/>
    <property type="match status" value="1"/>
</dbReference>
<dbReference type="SUPFAM" id="SSF47917">
    <property type="entry name" value="C-terminal domain of alpha and beta subunits of F1 ATP synthase"/>
    <property type="match status" value="1"/>
</dbReference>
<dbReference type="SUPFAM" id="SSF50615">
    <property type="entry name" value="N-terminal domain of alpha and beta subunits of F1 ATP synthase"/>
    <property type="match status" value="1"/>
</dbReference>
<dbReference type="SUPFAM" id="SSF52540">
    <property type="entry name" value="P-loop containing nucleoside triphosphate hydrolases"/>
    <property type="match status" value="1"/>
</dbReference>
<dbReference type="PROSITE" id="PS00152">
    <property type="entry name" value="ATPASE_ALPHA_BETA"/>
    <property type="match status" value="1"/>
</dbReference>
<sequence length="486" mass="53051">MTDTATAPVASDSVAGVGRIVRVTGPVVDIEFPHDSIPPVYNALKTTITIGEESTEITLEIALHLGDDVVRAIALKPTDGLVRGQEVRDTGAAISVPVGDITKGKVFNVTGDILNNEGGEPIEITERWPIHRKPPMFDQLESKTQLFETGIKVIDLLTPYVQGGKIGLFGGAGVGKTVLIQEMIQRVAQDHGGVSVFAGVGERTREGNDLIMEMEEAGVFDKTALVFGQMDEPPGTRLRVALSALTMAEYFRDVKNQDVLLFIDNIFRFTQAGSEVSTLLGRMPSAVGYQPNLADEMGVLQERITSTRGHSITSLQAIYVPADDYTDPAPATTFAHLDATTELSREIASRGLYPAVDPLTSTSRILDPRYLGQAHYDTATRVKAILQKNKELQEIIAILGVDELSEEDKVTVSRARRIQQFLSQNTYMAKKFTGVEGSTVPLKNTIESFSKIADGDYDHVAEQAFFNVGDLDDVERRWSEIQKENG</sequence>
<evidence type="ECO:0000255" key="1">
    <source>
        <dbReference type="HAMAP-Rule" id="MF_01347"/>
    </source>
</evidence>
<name>ATPB_CLAM3</name>
<proteinExistence type="inferred from homology"/>
<feature type="chain" id="PRO_0000339513" description="ATP synthase subunit beta">
    <location>
        <begin position="1"/>
        <end position="486"/>
    </location>
</feature>
<feature type="binding site" evidence="1">
    <location>
        <begin position="170"/>
        <end position="177"/>
    </location>
    <ligand>
        <name>ATP</name>
        <dbReference type="ChEBI" id="CHEBI:30616"/>
    </ligand>
</feature>
<reference key="1">
    <citation type="journal article" date="2008" name="J. Bacteriol.">
        <title>The genome sequence of the tomato-pathogenic actinomycete Clavibacter michiganensis subsp. michiganensis NCPPB382 reveals a large island involved in pathogenicity.</title>
        <authorList>
            <person name="Gartemann K.-H."/>
            <person name="Abt B."/>
            <person name="Bekel T."/>
            <person name="Burger A."/>
            <person name="Engemann J."/>
            <person name="Fluegel M."/>
            <person name="Gaigalat L."/>
            <person name="Goesmann A."/>
            <person name="Graefen I."/>
            <person name="Kalinowski J."/>
            <person name="Kaup O."/>
            <person name="Kirchner O."/>
            <person name="Krause L."/>
            <person name="Linke B."/>
            <person name="McHardy A."/>
            <person name="Meyer F."/>
            <person name="Pohle S."/>
            <person name="Rueckert C."/>
            <person name="Schneiker S."/>
            <person name="Zellermann E.-M."/>
            <person name="Puehler A."/>
            <person name="Eichenlaub R."/>
            <person name="Kaiser O."/>
            <person name="Bartels D."/>
        </authorList>
    </citation>
    <scope>NUCLEOTIDE SEQUENCE [LARGE SCALE GENOMIC DNA]</scope>
    <source>
        <strain>NCPPB 382</strain>
    </source>
</reference>
<gene>
    <name evidence="1" type="primary">atpD</name>
    <name type="ordered locus">CMM_1169</name>
</gene>
<comment type="function">
    <text evidence="1">Produces ATP from ADP in the presence of a proton gradient across the membrane. The catalytic sites are hosted primarily by the beta subunits.</text>
</comment>
<comment type="catalytic activity">
    <reaction evidence="1">
        <text>ATP + H2O + 4 H(+)(in) = ADP + phosphate + 5 H(+)(out)</text>
        <dbReference type="Rhea" id="RHEA:57720"/>
        <dbReference type="ChEBI" id="CHEBI:15377"/>
        <dbReference type="ChEBI" id="CHEBI:15378"/>
        <dbReference type="ChEBI" id="CHEBI:30616"/>
        <dbReference type="ChEBI" id="CHEBI:43474"/>
        <dbReference type="ChEBI" id="CHEBI:456216"/>
        <dbReference type="EC" id="7.1.2.2"/>
    </reaction>
</comment>
<comment type="subunit">
    <text evidence="1">F-type ATPases have 2 components, CF(1) - the catalytic core - and CF(0) - the membrane proton channel. CF(1) has five subunits: alpha(3), beta(3), gamma(1), delta(1), epsilon(1). CF(0) has three main subunits: a(1), b(2) and c(9-12). The alpha and beta chains form an alternating ring which encloses part of the gamma chain. CF(1) is attached to CF(0) by a central stalk formed by the gamma and epsilon chains, while a peripheral stalk is formed by the delta and b chains.</text>
</comment>
<comment type="subcellular location">
    <subcellularLocation>
        <location evidence="1">Cell membrane</location>
        <topology evidence="1">Peripheral membrane protein</topology>
    </subcellularLocation>
</comment>
<comment type="similarity">
    <text evidence="1">Belongs to the ATPase alpha/beta chains family.</text>
</comment>
<keyword id="KW-0066">ATP synthesis</keyword>
<keyword id="KW-0067">ATP-binding</keyword>
<keyword id="KW-1003">Cell membrane</keyword>
<keyword id="KW-0139">CF(1)</keyword>
<keyword id="KW-0375">Hydrogen ion transport</keyword>
<keyword id="KW-0406">Ion transport</keyword>
<keyword id="KW-0472">Membrane</keyword>
<keyword id="KW-0547">Nucleotide-binding</keyword>
<keyword id="KW-1278">Translocase</keyword>
<keyword id="KW-0813">Transport</keyword>
<organism>
    <name type="scientific">Clavibacter michiganensis subsp. michiganensis (strain NCPPB 382)</name>
    <dbReference type="NCBI Taxonomy" id="443906"/>
    <lineage>
        <taxon>Bacteria</taxon>
        <taxon>Bacillati</taxon>
        <taxon>Actinomycetota</taxon>
        <taxon>Actinomycetes</taxon>
        <taxon>Micrococcales</taxon>
        <taxon>Microbacteriaceae</taxon>
        <taxon>Clavibacter</taxon>
    </lineage>
</organism>
<accession>A5CQ60</accession>